<gene>
    <name evidence="8" type="primary">fapC</name>
    <name evidence="9" type="synonym">HZ99_04090</name>
    <name evidence="8" type="synonym">PSUK4_00030</name>
</gene>
<dbReference type="EMBL" id="ACOQ01000001">
    <property type="protein sequence ID" value="EEP64551.1"/>
    <property type="molecule type" value="Genomic_DNA"/>
</dbReference>
<dbReference type="EMBL" id="CP008896">
    <property type="protein sequence ID" value="AIG01391.1"/>
    <property type="molecule type" value="Genomic_DNA"/>
</dbReference>
<dbReference type="RefSeq" id="WP_008603558.1">
    <property type="nucleotide sequence ID" value="NZ_CP008896.1"/>
</dbReference>
<dbReference type="KEGG" id="pfn:HZ99_04090"/>
<dbReference type="GO" id="GO:0005576">
    <property type="term" value="C:extracellular region"/>
    <property type="evidence" value="ECO:0007669"/>
    <property type="project" value="UniProtKB-SubCell"/>
</dbReference>
<dbReference type="GO" id="GO:0009289">
    <property type="term" value="C:pilus"/>
    <property type="evidence" value="ECO:0007669"/>
    <property type="project" value="UniProtKB-SubCell"/>
</dbReference>
<dbReference type="GO" id="GO:0007155">
    <property type="term" value="P:cell adhesion"/>
    <property type="evidence" value="ECO:0007669"/>
    <property type="project" value="UniProtKB-KW"/>
</dbReference>
<protein>
    <recommendedName>
        <fullName evidence="11">Functional amyloid subunit FapC</fullName>
    </recommendedName>
    <alternativeName>
        <fullName evidence="8">Amyloid-like fimbrin subunit FapC</fullName>
        <shortName>ALF subunit FapC</shortName>
    </alternativeName>
    <alternativeName>
        <fullName evidence="10">Fibril amyloid subunit FapC</fullName>
    </alternativeName>
</protein>
<name>FAPC_PSEFL</name>
<reference key="1">
    <citation type="journal article" date="2010" name="Mol. Microbiol.">
        <title>Functional amyloid in Pseudomonas.</title>
        <authorList>
            <person name="Dueholm M.S."/>
            <person name="Petersen S.V."/>
            <person name="Soenderkaer M."/>
            <person name="Larsen P."/>
            <person name="Christiansen G."/>
            <person name="Hein K.L."/>
            <person name="Enghild J.J."/>
            <person name="Nielsen J.L."/>
            <person name="Nielsen K.L."/>
            <person name="Nielsen P.H."/>
            <person name="Otzen D.E."/>
        </authorList>
    </citation>
    <scope>NUCLEOTIDE SEQUENCE [GENOMIC DNA]</scope>
    <scope>PROTEIN SEQUENCE OF N-TERMINUS</scope>
    <scope>FUNCTION</scope>
    <scope>SUBCELLULAR LOCATION</scope>
    <scope>REPEATS</scope>
    <source>
        <strain>DSM 29051 / UK4</strain>
    </source>
</reference>
<reference key="2">
    <citation type="journal article" date="2014" name="Genome Announc.">
        <title>Complete Genome Sequence of Pseudomonas sp. UK4, a Model Organism for Studies of Functional Amyloids in Pseudomonas.</title>
        <authorList>
            <person name="Dueholm M.S."/>
            <person name="Danielsen H.N."/>
            <person name="Nielsen P.H."/>
        </authorList>
    </citation>
    <scope>NUCLEOTIDE SEQUENCE [LARGE SCALE GENOMIC DNA]</scope>
    <source>
        <strain>DSM 29051 / UK4</strain>
    </source>
</reference>
<reference key="3">
    <citation type="journal article" date="2017" name="Nat. Commun.">
        <title>A new class of hybrid secretion system is employed in Pseudomonas amyloid biogenesis.</title>
        <authorList>
            <person name="Rouse S.L."/>
            <person name="Hawthorne W.J."/>
            <person name="Berry J.L."/>
            <person name="Chorev D.S."/>
            <person name="Ionescu S.A."/>
            <person name="Lambert S."/>
            <person name="Stylianou F."/>
            <person name="Ewert W."/>
            <person name="Mackie U."/>
            <person name="Morgan R.M.L."/>
            <person name="Otzen D."/>
            <person name="Herbst F.A."/>
            <person name="Nielsen P.H."/>
            <person name="Dueholm M."/>
            <person name="Bayley H."/>
            <person name="Robinson C.V."/>
            <person name="Hare S."/>
            <person name="Matthews S."/>
        </authorList>
    </citation>
    <scope>PROTEIN SEQUENCE OF 30-116 AND 124-247</scope>
    <scope>FUNCTION</scope>
    <scope>SUBCELLULAR LOCATION</scope>
    <source>
        <strain>DSM 29051 / UK4</strain>
    </source>
</reference>
<reference key="4">
    <citation type="journal article" date="2013" name="MicrobiologyOpen">
        <title>Expression of Fap amyloids in Pseudomonas aeruginosa, P. fluorescens, and P. putida results in aggregation and increased biofilm formation.</title>
        <authorList>
            <person name="Dueholm M.S."/>
            <person name="Soendergaard M.T."/>
            <person name="Nilsson M."/>
            <person name="Christiansen G."/>
            <person name="Stensballe A."/>
            <person name="Overgaard M.T."/>
            <person name="Givskov M."/>
            <person name="Tolker-Nielsen T."/>
            <person name="Otzen D.E."/>
            <person name="Nielsen P.H."/>
        </authorList>
    </citation>
    <scope>FUNCTION</scope>
    <scope>SUBUNIT</scope>
    <scope>SUBCELLULAR LOCATION</scope>
    <scope>MOTIF</scope>
    <scope>DISRUPTION PHENOTYPE</scope>
    <source>
        <strain>DSM 29051 / UK4</strain>
    </source>
</reference>
<reference key="5">
    <citation type="journal article" date="2015" name="Front. Microbiol.">
        <title>Functional bacterial amyloid increases Pseudomonas biofilm hydrophobicity and stiffness.</title>
        <authorList>
            <person name="Zeng G."/>
            <person name="Vad B.S."/>
            <person name="Dueholm M.S."/>
            <person name="Christiansen G."/>
            <person name="Nilsson M."/>
            <person name="Tolker-Nielsen T."/>
            <person name="Nielsen P.H."/>
            <person name="Meyer R.L."/>
            <person name="Otzen D.E."/>
        </authorList>
    </citation>
    <scope>FUNCTION</scope>
    <scope>DISRUPTION PHENOTYPE</scope>
    <source>
        <strain>DSM 29051 / UK4</strain>
    </source>
</reference>
<reference key="6">
    <citation type="journal article" date="2018" name="J. Mol. Biol.">
        <title>Ecology and Biogenesis of Functional Amyloids in Pseudomonas.</title>
        <authorList>
            <person name="Rouse S.L."/>
            <person name="Matthews S.J."/>
            <person name="Dueholm M.S."/>
        </authorList>
    </citation>
    <scope>STRUCTURAL MODEL</scope>
    <scope>DOMAIN</scope>
    <source>
        <strain>DSM 29051 / UK4</strain>
    </source>
</reference>
<reference key="7">
    <citation type="journal article" date="2023" name="J. Mol. Biol.">
        <title>FapA is an Intrinsically Disordered Chaperone for Pseudomonas Functional Amyloid FapC.</title>
        <authorList>
            <person name="Rasmussen H.O."/>
            <person name="Kumar A."/>
            <person name="Shin B."/>
            <person name="Stylianou F."/>
            <person name="Sewell L."/>
            <person name="Xu Y."/>
            <person name="Otzen D.E."/>
            <person name="Pedersen J.S."/>
            <person name="Matthews S.J."/>
        </authorList>
    </citation>
    <scope>SUBUNIT</scope>
    <source>
        <strain>DSM 29051 / UK4</strain>
    </source>
</reference>
<reference key="8">
    <citation type="journal article" date="2023" name="Biomol. NMR. Assign.">
        <title>Solution-state NMR assignment and secondary structure propensity of the full length and minimalistic-truncated prefibrillar monomeric form of biofilm forming functional amyloid FapC from Pseudomonas aeruginosa.</title>
        <authorList>
            <person name="Byeon C.H."/>
            <person name="Wang P.C."/>
            <person name="Byeon I.L."/>
            <person name="Akbey U."/>
        </authorList>
    </citation>
    <scope>STRUCTURAL MODEL</scope>
    <scope>DOMAIN</scope>
    <source>
        <strain>DSM 29051 / UK4</strain>
    </source>
</reference>
<reference key="9">
    <citation type="journal article" date="2024" name="FEBS J.">
        <title>Intrinsically disordered Pseudomonas chaperone FapA slows down the fibrillation of major biofilm-forming functional amyloid FapC.</title>
        <authorList>
            <person name="Byeon C.H."/>
            <person name="Hansen K.H."/>
            <person name="Jeffrey J."/>
            <person name="Saricayir H."/>
            <person name="Andreasen M."/>
            <person name="Akbey U."/>
        </authorList>
    </citation>
    <scope>SUBUNIT</scope>
    <scope>STRUCTURAL MODEL</scope>
    <scope>DOMAIN</scope>
    <source>
        <strain>DSM 29051 / UK4</strain>
    </source>
</reference>
<feature type="signal peptide" evidence="1">
    <location>
        <begin position="1"/>
        <end position="24"/>
    </location>
</feature>
<feature type="chain" id="PRO_0000461515" description="Functional amyloid subunit FapC" evidence="1">
    <location>
        <begin position="25"/>
        <end position="250"/>
    </location>
</feature>
<feature type="repeat" description="FapC_R1" evidence="12 14">
    <location>
        <begin position="62"/>
        <end position="95"/>
    </location>
</feature>
<feature type="repeat" description="FapC_R2" evidence="12 14">
    <location>
        <begin position="127"/>
        <end position="160"/>
    </location>
</feature>
<feature type="repeat" description="FapC_R3" evidence="12 14">
    <location>
        <begin position="200"/>
        <end position="233"/>
    </location>
</feature>
<feature type="region of interest" description="Linker 1" evidence="14">
    <location>
        <begin position="96"/>
        <end position="126"/>
    </location>
</feature>
<feature type="region of interest" description="Linker 2" evidence="14">
    <location>
        <begin position="161"/>
        <end position="199"/>
    </location>
</feature>
<feature type="short sequence motif" description="Cys-X-X-Cys" evidence="13">
    <location>
        <begin position="237"/>
        <end position="240"/>
    </location>
</feature>
<keyword id="KW-0034">Amyloid</keyword>
<keyword id="KW-0130">Cell adhesion</keyword>
<keyword id="KW-0903">Direct protein sequencing</keyword>
<keyword id="KW-0281">Fimbrium</keyword>
<keyword id="KW-0677">Repeat</keyword>
<keyword id="KW-0964">Secreted</keyword>
<keyword id="KW-0732">Signal</keyword>
<comment type="function">
    <text evidence="1 2 3 4 6 7">The major functional amyloid subunit in this bacterium (PubMed:20572935, PubMed:23504942). Intrinsically disordered in its monomeric state (PubMed:37162737, PubMed:38349812). Upon overexpression of the endogenous six-gene locus (fapA-fapF) in situ, cells form large clumps during liquid growth, make large amounts of biofilm and produce amyloid fibrils (PubMed:23504942, PubMed:26500638). Expression of the 6 gene operon in E.coli strain BL21(DE3) induces flocculation and biofilm formation with copious extracellular fibrils (PubMed:20572935, PubMed:28811582).</text>
</comment>
<comment type="subunit">
    <text evidence="1 2 5 7">The major component of purified amyloid fibrils (PubMed:20572935, PubMed:23504942). Forms fibrils in vitro; in the presence of FapA the fibrils are about 50% wider (PubMed:36368411). Interacts with FapA (PubMed:36368411, PubMed:38349812). Fibrillates in vitro; this is inhibited by FapA (PubMed:36368411, PubMed:38349812). Fibrils are resistant to boiling in 2% (weight/vol) SDS and require &gt;90% (vol/vol) formic acid to dissolve (PubMed:20572935, PubMed:23504942).</text>
</comment>
<comment type="subcellular location">
    <subcellularLocation>
        <location evidence="1 2">Fimbrium</location>
    </subcellularLocation>
    <subcellularLocation>
        <location evidence="2 4">Secreted</location>
    </subcellularLocation>
    <text evidence="2 4">Part of an extracellular amyloid fibril (PubMed:23504942). Secreted through the inner membrane by the Sec pathway, exported from the periplasm by FapF (PubMed:28811582).</text>
</comment>
<comment type="domain">
    <text evidence="6 7 14 15">Each of the three repeats is modeled as a beta-hairpin; the repeats and inserts are modeled to stack on top of each other, overall forming a beta-helix (Probable) (PubMed:29753779, PubMed:38349812). Soluble monomeric FapC is predominantly disordered (PubMed:37162737, PubMed:38349812).</text>
</comment>
<comment type="disruption phenotype">
    <text evidence="2 3">Deletion of just fapC in an overexpressing strain yields cells without amyloid fibrils (PubMed:26500638). Deletion of the entire fapA-fapF six-gene locus shows no visible growth phenotype (PubMed:23504942, PubMed:26500638).</text>
</comment>
<comment type="similarity">
    <text evidence="12">Belongs to the FapB/FapC family.</text>
</comment>
<proteinExistence type="evidence at protein level"/>
<accession>P0DXF5</accession>
<sequence>MKPTMALKPLVFALAALMAVAAQAGPAEKWKPTPAPTGTVAAAVTDTQVSKDNKFDDTKTLNNAGANGSLSNSKGNLGANIAAGSGNQQDNAAAITSSAGDAATVFAVADIYQESKDNKFTNKGTQNNALLNNSANNSSGNVGVNVAAGQGNQQKNNLAIVTADGKNVAAASNTEQVSLDNHFLNEASSKHSYKPQYVVNNAGLLNSANNASGNIGVNVAAGAGNQQSNTLTLGSGCTVCAAGTGSKLAF</sequence>
<organism>
    <name type="scientific">Pseudomonas fluorescens</name>
    <dbReference type="NCBI Taxonomy" id="294"/>
    <lineage>
        <taxon>Bacteria</taxon>
        <taxon>Pseudomonadati</taxon>
        <taxon>Pseudomonadota</taxon>
        <taxon>Gammaproteobacteria</taxon>
        <taxon>Pseudomonadales</taxon>
        <taxon>Pseudomonadaceae</taxon>
        <taxon>Pseudomonas</taxon>
    </lineage>
</organism>
<evidence type="ECO:0000269" key="1">
    <source>
    </source>
</evidence>
<evidence type="ECO:0000269" key="2">
    <source>
    </source>
</evidence>
<evidence type="ECO:0000269" key="3">
    <source>
    </source>
</evidence>
<evidence type="ECO:0000269" key="4">
    <source>
    </source>
</evidence>
<evidence type="ECO:0000269" key="5">
    <source>
    </source>
</evidence>
<evidence type="ECO:0000269" key="6">
    <source>
    </source>
</evidence>
<evidence type="ECO:0000269" key="7">
    <source>
    </source>
</evidence>
<evidence type="ECO:0000303" key="8">
    <source>
    </source>
</evidence>
<evidence type="ECO:0000303" key="9">
    <source>
    </source>
</evidence>
<evidence type="ECO:0000303" key="10">
    <source>
    </source>
</evidence>
<evidence type="ECO:0000305" key="11"/>
<evidence type="ECO:0000305" key="12">
    <source>
    </source>
</evidence>
<evidence type="ECO:0000305" key="13">
    <source>
    </source>
</evidence>
<evidence type="ECO:0000305" key="14">
    <source>
    </source>
</evidence>
<evidence type="ECO:0000305" key="15">
    <source>
    </source>
</evidence>